<keyword id="KW-1003">Cell membrane</keyword>
<keyword id="KW-0472">Membrane</keyword>
<keyword id="KW-1185">Reference proteome</keyword>
<keyword id="KW-0812">Transmembrane</keyword>
<keyword id="KW-1133">Transmembrane helix</keyword>
<organism>
    <name type="scientific">Treponema pallidum (strain Nichols)</name>
    <dbReference type="NCBI Taxonomy" id="243276"/>
    <lineage>
        <taxon>Bacteria</taxon>
        <taxon>Pseudomonadati</taxon>
        <taxon>Spirochaetota</taxon>
        <taxon>Spirochaetia</taxon>
        <taxon>Spirochaetales</taxon>
        <taxon>Treponemataceae</taxon>
        <taxon>Treponema</taxon>
    </lineage>
</organism>
<accession>O83586</accession>
<feature type="chain" id="PRO_0000202277" description="Uncharacterized protein TP_0577">
    <location>
        <begin position="1"/>
        <end position="614"/>
    </location>
</feature>
<feature type="transmembrane region" description="Helical" evidence="1">
    <location>
        <begin position="494"/>
        <end position="516"/>
    </location>
</feature>
<feature type="transmembrane region" description="Helical" evidence="1">
    <location>
        <begin position="552"/>
        <end position="574"/>
    </location>
</feature>
<feature type="region of interest" description="Disordered" evidence="2">
    <location>
        <begin position="588"/>
        <end position="614"/>
    </location>
</feature>
<feature type="compositionally biased region" description="Basic and acidic residues" evidence="2">
    <location>
        <begin position="591"/>
        <end position="605"/>
    </location>
</feature>
<name>Y577_TREPA</name>
<dbReference type="EMBL" id="AE000520">
    <property type="protein sequence ID" value="AAC65558.1"/>
    <property type="molecule type" value="Genomic_DNA"/>
</dbReference>
<dbReference type="PIR" id="G71306">
    <property type="entry name" value="G71306"/>
</dbReference>
<dbReference type="RefSeq" id="WP_010882023.1">
    <property type="nucleotide sequence ID" value="NC_021490.2"/>
</dbReference>
<dbReference type="SMR" id="O83586"/>
<dbReference type="STRING" id="243276.TP_0577"/>
<dbReference type="EnsemblBacteria" id="AAC65558">
    <property type="protein sequence ID" value="AAC65558"/>
    <property type="gene ID" value="TP_0577"/>
</dbReference>
<dbReference type="KEGG" id="tpa:TP_0577"/>
<dbReference type="KEGG" id="tpw:TPANIC_0577"/>
<dbReference type="eggNOG" id="ENOG5032HA5">
    <property type="taxonomic scope" value="Bacteria"/>
</dbReference>
<dbReference type="HOGENOM" id="CLU_444757_0_0_12"/>
<dbReference type="OrthoDB" id="354676at2"/>
<dbReference type="Proteomes" id="UP000000811">
    <property type="component" value="Chromosome"/>
</dbReference>
<dbReference type="GO" id="GO:0005886">
    <property type="term" value="C:plasma membrane"/>
    <property type="evidence" value="ECO:0007669"/>
    <property type="project" value="UniProtKB-SubCell"/>
</dbReference>
<sequence>MRNGEYSRSHGRSVRTVHPFLLGVSVYQYPVCRTTVNGSYAQSFAALLFFPQIAVAFSATAPAPSFDSFLSARQRHPPASSFLASPAAPTHPLFATARTTAAQLLSTPPAPARPRPRPDHVIPKEKWRLAVADFTFHGIPKIFQRYVRPARELLFIELKKLPLRHFLSEAEQRERAALPHEEAYHARLKERAHLQRARDFVSLHPVSDHARRLRTAAFEKQIKEKEQEIERARVEVRTARARFFRPWLQAEVLVLGAQNEPHALPERFHLATHLRQKKLSALVTGKLVDVAGYVRISLYLSTGLEAEPTREFTLAGPYRELPRLMHTLSAQLRSAIENAQPVRIVFDVHPPHARLSFQGVPVEDLSKPLISYPGRYVVDVSAAGYFSATKEIYIENRPAFSLRVRLVARPQHRVRVQLTDNSAAPIFSGARSVGVTPFSTVVTDLREIFTVGPAGARSFAFIERGTFPNSQPSTLVLPAPNPNATQDLAYKRDVAYWSFGALCIAVPIALILGSTLADTHQALERAKAASAQPPPPPAPAGTGALERKSQHLLIGTGVAVGVAVILSINFIVHAARYLNAVMHNAPQAVRPRADKDIQTLTHRDEAEEDQEEDS</sequence>
<comment type="subcellular location">
    <subcellularLocation>
        <location evidence="3">Cell membrane</location>
        <topology evidence="3">Multi-pass membrane protein</topology>
    </subcellularLocation>
</comment>
<evidence type="ECO:0000255" key="1"/>
<evidence type="ECO:0000256" key="2">
    <source>
        <dbReference type="SAM" id="MobiDB-lite"/>
    </source>
</evidence>
<evidence type="ECO:0000305" key="3"/>
<proteinExistence type="predicted"/>
<gene>
    <name type="ordered locus">TP_0577</name>
</gene>
<reference key="1">
    <citation type="journal article" date="1998" name="Science">
        <title>Complete genome sequence of Treponema pallidum, the syphilis spirochete.</title>
        <authorList>
            <person name="Fraser C.M."/>
            <person name="Norris S.J."/>
            <person name="Weinstock G.M."/>
            <person name="White O."/>
            <person name="Sutton G.G."/>
            <person name="Dodson R.J."/>
            <person name="Gwinn M.L."/>
            <person name="Hickey E.K."/>
            <person name="Clayton R.A."/>
            <person name="Ketchum K.A."/>
            <person name="Sodergren E."/>
            <person name="Hardham J.M."/>
            <person name="McLeod M.P."/>
            <person name="Salzberg S.L."/>
            <person name="Peterson J.D."/>
            <person name="Khalak H.G."/>
            <person name="Richardson D.L."/>
            <person name="Howell J.K."/>
            <person name="Chidambaram M."/>
            <person name="Utterback T.R."/>
            <person name="McDonald L.A."/>
            <person name="Artiach P."/>
            <person name="Bowman C."/>
            <person name="Cotton M.D."/>
            <person name="Fujii C."/>
            <person name="Garland S.A."/>
            <person name="Hatch B."/>
            <person name="Horst K."/>
            <person name="Roberts K.M."/>
            <person name="Sandusky M."/>
            <person name="Weidman J.F."/>
            <person name="Smith H.O."/>
            <person name="Venter J.C."/>
        </authorList>
    </citation>
    <scope>NUCLEOTIDE SEQUENCE [LARGE SCALE GENOMIC DNA]</scope>
    <source>
        <strain>Nichols</strain>
    </source>
</reference>
<protein>
    <recommendedName>
        <fullName>Uncharacterized protein TP_0577</fullName>
    </recommendedName>
</protein>